<sequence length="169" mass="19064">MALLPILEFPDPRLRTVAKPVTQVDDSIRQLVDDMFETMYDAPGIGLAATQVNVHKRVVVIDVSEDKSQPLVFINPEIEVLDEELSQYDEGCLSVPGFYETVERPGHIRVKALDRAGNAFELQPQGLLAVCIQHELDHLNGKLFVDHISPFKRSRIRSKLEKKHKAGVR</sequence>
<accession>B3PGY7</accession>
<gene>
    <name evidence="1" type="primary">def</name>
    <name type="ordered locus">CJA_3582</name>
</gene>
<proteinExistence type="inferred from homology"/>
<dbReference type="EC" id="3.5.1.88" evidence="1"/>
<dbReference type="EMBL" id="CP000934">
    <property type="protein sequence ID" value="ACE82690.1"/>
    <property type="molecule type" value="Genomic_DNA"/>
</dbReference>
<dbReference type="RefSeq" id="WP_012489157.1">
    <property type="nucleotide sequence ID" value="NC_010995.1"/>
</dbReference>
<dbReference type="SMR" id="B3PGY7"/>
<dbReference type="STRING" id="498211.CJA_3582"/>
<dbReference type="KEGG" id="cja:CJA_3582"/>
<dbReference type="eggNOG" id="COG0242">
    <property type="taxonomic scope" value="Bacteria"/>
</dbReference>
<dbReference type="HOGENOM" id="CLU_061901_2_1_6"/>
<dbReference type="OrthoDB" id="9804313at2"/>
<dbReference type="Proteomes" id="UP000001036">
    <property type="component" value="Chromosome"/>
</dbReference>
<dbReference type="GO" id="GO:0046872">
    <property type="term" value="F:metal ion binding"/>
    <property type="evidence" value="ECO:0007669"/>
    <property type="project" value="UniProtKB-KW"/>
</dbReference>
<dbReference type="GO" id="GO:0042586">
    <property type="term" value="F:peptide deformylase activity"/>
    <property type="evidence" value="ECO:0007669"/>
    <property type="project" value="UniProtKB-UniRule"/>
</dbReference>
<dbReference type="GO" id="GO:0043686">
    <property type="term" value="P:co-translational protein modification"/>
    <property type="evidence" value="ECO:0007669"/>
    <property type="project" value="TreeGrafter"/>
</dbReference>
<dbReference type="GO" id="GO:0006412">
    <property type="term" value="P:translation"/>
    <property type="evidence" value="ECO:0007669"/>
    <property type="project" value="UniProtKB-UniRule"/>
</dbReference>
<dbReference type="CDD" id="cd00487">
    <property type="entry name" value="Pep_deformylase"/>
    <property type="match status" value="1"/>
</dbReference>
<dbReference type="FunFam" id="3.90.45.10:FF:000001">
    <property type="entry name" value="Peptide deformylase"/>
    <property type="match status" value="1"/>
</dbReference>
<dbReference type="Gene3D" id="3.90.45.10">
    <property type="entry name" value="Peptide deformylase"/>
    <property type="match status" value="1"/>
</dbReference>
<dbReference type="HAMAP" id="MF_00163">
    <property type="entry name" value="Pep_deformylase"/>
    <property type="match status" value="1"/>
</dbReference>
<dbReference type="InterPro" id="IPR023635">
    <property type="entry name" value="Peptide_deformylase"/>
</dbReference>
<dbReference type="InterPro" id="IPR036821">
    <property type="entry name" value="Peptide_deformylase_sf"/>
</dbReference>
<dbReference type="NCBIfam" id="TIGR00079">
    <property type="entry name" value="pept_deformyl"/>
    <property type="match status" value="1"/>
</dbReference>
<dbReference type="NCBIfam" id="NF001159">
    <property type="entry name" value="PRK00150.1-3"/>
    <property type="match status" value="1"/>
</dbReference>
<dbReference type="PANTHER" id="PTHR10458">
    <property type="entry name" value="PEPTIDE DEFORMYLASE"/>
    <property type="match status" value="1"/>
</dbReference>
<dbReference type="PANTHER" id="PTHR10458:SF21">
    <property type="entry name" value="PEPTIDE DEFORMYLASE"/>
    <property type="match status" value="1"/>
</dbReference>
<dbReference type="Pfam" id="PF01327">
    <property type="entry name" value="Pep_deformylase"/>
    <property type="match status" value="1"/>
</dbReference>
<dbReference type="PIRSF" id="PIRSF004749">
    <property type="entry name" value="Pep_def"/>
    <property type="match status" value="1"/>
</dbReference>
<dbReference type="PRINTS" id="PR01576">
    <property type="entry name" value="PDEFORMYLASE"/>
</dbReference>
<dbReference type="SUPFAM" id="SSF56420">
    <property type="entry name" value="Peptide deformylase"/>
    <property type="match status" value="1"/>
</dbReference>
<reference key="1">
    <citation type="journal article" date="2008" name="J. Bacteriol.">
        <title>Insights into plant cell wall degradation from the genome sequence of the soil bacterium Cellvibrio japonicus.</title>
        <authorList>
            <person name="DeBoy R.T."/>
            <person name="Mongodin E.F."/>
            <person name="Fouts D.E."/>
            <person name="Tailford L.E."/>
            <person name="Khouri H."/>
            <person name="Emerson J.B."/>
            <person name="Mohamoud Y."/>
            <person name="Watkins K."/>
            <person name="Henrissat B."/>
            <person name="Gilbert H.J."/>
            <person name="Nelson K.E."/>
        </authorList>
    </citation>
    <scope>NUCLEOTIDE SEQUENCE [LARGE SCALE GENOMIC DNA]</scope>
    <source>
        <strain>Ueda107</strain>
    </source>
</reference>
<comment type="function">
    <text evidence="1">Removes the formyl group from the N-terminal Met of newly synthesized proteins. Requires at least a dipeptide for an efficient rate of reaction. N-terminal L-methionine is a prerequisite for activity but the enzyme has broad specificity at other positions.</text>
</comment>
<comment type="catalytic activity">
    <reaction evidence="1">
        <text>N-terminal N-formyl-L-methionyl-[peptide] + H2O = N-terminal L-methionyl-[peptide] + formate</text>
        <dbReference type="Rhea" id="RHEA:24420"/>
        <dbReference type="Rhea" id="RHEA-COMP:10639"/>
        <dbReference type="Rhea" id="RHEA-COMP:10640"/>
        <dbReference type="ChEBI" id="CHEBI:15377"/>
        <dbReference type="ChEBI" id="CHEBI:15740"/>
        <dbReference type="ChEBI" id="CHEBI:49298"/>
        <dbReference type="ChEBI" id="CHEBI:64731"/>
        <dbReference type="EC" id="3.5.1.88"/>
    </reaction>
</comment>
<comment type="cofactor">
    <cofactor evidence="1">
        <name>Fe(2+)</name>
        <dbReference type="ChEBI" id="CHEBI:29033"/>
    </cofactor>
    <text evidence="1">Binds 1 Fe(2+) ion.</text>
</comment>
<comment type="similarity">
    <text evidence="1">Belongs to the polypeptide deformylase family.</text>
</comment>
<keyword id="KW-0378">Hydrolase</keyword>
<keyword id="KW-0408">Iron</keyword>
<keyword id="KW-0479">Metal-binding</keyword>
<keyword id="KW-0648">Protein biosynthesis</keyword>
<keyword id="KW-1185">Reference proteome</keyword>
<feature type="chain" id="PRO_1000097296" description="Peptide deformylase">
    <location>
        <begin position="1"/>
        <end position="169"/>
    </location>
</feature>
<feature type="active site" evidence="1">
    <location>
        <position position="135"/>
    </location>
</feature>
<feature type="binding site" evidence="1">
    <location>
        <position position="92"/>
    </location>
    <ligand>
        <name>Fe cation</name>
        <dbReference type="ChEBI" id="CHEBI:24875"/>
    </ligand>
</feature>
<feature type="binding site" evidence="1">
    <location>
        <position position="134"/>
    </location>
    <ligand>
        <name>Fe cation</name>
        <dbReference type="ChEBI" id="CHEBI:24875"/>
    </ligand>
</feature>
<feature type="binding site" evidence="1">
    <location>
        <position position="138"/>
    </location>
    <ligand>
        <name>Fe cation</name>
        <dbReference type="ChEBI" id="CHEBI:24875"/>
    </ligand>
</feature>
<organism>
    <name type="scientific">Cellvibrio japonicus (strain Ueda107)</name>
    <name type="common">Pseudomonas fluorescens subsp. cellulosa</name>
    <dbReference type="NCBI Taxonomy" id="498211"/>
    <lineage>
        <taxon>Bacteria</taxon>
        <taxon>Pseudomonadati</taxon>
        <taxon>Pseudomonadota</taxon>
        <taxon>Gammaproteobacteria</taxon>
        <taxon>Cellvibrionales</taxon>
        <taxon>Cellvibrionaceae</taxon>
        <taxon>Cellvibrio</taxon>
    </lineage>
</organism>
<name>DEF_CELJU</name>
<evidence type="ECO:0000255" key="1">
    <source>
        <dbReference type="HAMAP-Rule" id="MF_00163"/>
    </source>
</evidence>
<protein>
    <recommendedName>
        <fullName evidence="1">Peptide deformylase</fullName>
        <shortName evidence="1">PDF</shortName>
        <ecNumber evidence="1">3.5.1.88</ecNumber>
    </recommendedName>
    <alternativeName>
        <fullName evidence="1">Polypeptide deformylase</fullName>
    </alternativeName>
</protein>